<feature type="chain" id="PRO_0000293006" description="Pyridoxal 5'-phosphate synthase subunit PdxT">
    <location>
        <begin position="1"/>
        <end position="206"/>
    </location>
</feature>
<feature type="active site" description="Nucleophile" evidence="1">
    <location>
        <position position="91"/>
    </location>
</feature>
<feature type="active site" description="Charge relay system" evidence="1">
    <location>
        <position position="187"/>
    </location>
</feature>
<feature type="active site" description="Charge relay system" evidence="1">
    <location>
        <position position="189"/>
    </location>
</feature>
<feature type="binding site" evidence="1">
    <location>
        <begin position="59"/>
        <end position="61"/>
    </location>
    <ligand>
        <name>L-glutamine</name>
        <dbReference type="ChEBI" id="CHEBI:58359"/>
    </ligand>
</feature>
<feature type="binding site" evidence="1">
    <location>
        <position position="123"/>
    </location>
    <ligand>
        <name>L-glutamine</name>
        <dbReference type="ChEBI" id="CHEBI:58359"/>
    </ligand>
</feature>
<feature type="binding site" evidence="1">
    <location>
        <begin position="151"/>
        <end position="152"/>
    </location>
    <ligand>
        <name>L-glutamine</name>
        <dbReference type="ChEBI" id="CHEBI:58359"/>
    </ligand>
</feature>
<sequence length="206" mass="22140">MNAVPDGRSDKPRSVVGVLALQGDTREHLAALTEAGAEAVTVRRLRELEAVDALVIPGGESTAMSHLLREFELLEPLRARLAEGMPAYGSCAGMILLATEILDAGAAGREATPLKGIDMSVRRNAFGRQVDSFEGDIPFVGLDSPVHAVFIRAPWVERIGDGVEVLARADGHIVAVRQGRMLATAFHPEVTGDRRVHKLFVDMVSE</sequence>
<accession>A1UF87</accession>
<proteinExistence type="inferred from homology"/>
<name>PDXT_MYCSK</name>
<protein>
    <recommendedName>
        <fullName evidence="1">Pyridoxal 5'-phosphate synthase subunit PdxT</fullName>
        <ecNumber evidence="1">4.3.3.6</ecNumber>
    </recommendedName>
    <alternativeName>
        <fullName evidence="1">Pdx2</fullName>
    </alternativeName>
    <alternativeName>
        <fullName evidence="1">Pyridoxal 5'-phosphate synthase glutaminase subunit</fullName>
        <ecNumber evidence="1">3.5.1.2</ecNumber>
    </alternativeName>
</protein>
<keyword id="KW-0315">Glutamine amidotransferase</keyword>
<keyword id="KW-0378">Hydrolase</keyword>
<keyword id="KW-0456">Lyase</keyword>
<keyword id="KW-0663">Pyridoxal phosphate</keyword>
<dbReference type="EC" id="4.3.3.6" evidence="1"/>
<dbReference type="EC" id="3.5.1.2" evidence="1"/>
<dbReference type="EMBL" id="CP000518">
    <property type="protein sequence ID" value="ABL91495.1"/>
    <property type="molecule type" value="Genomic_DNA"/>
</dbReference>
<dbReference type="SMR" id="A1UF87"/>
<dbReference type="STRING" id="189918.Mkms_2297"/>
<dbReference type="MEROPS" id="C26.A32"/>
<dbReference type="KEGG" id="mkm:Mkms_2297"/>
<dbReference type="HOGENOM" id="CLU_069674_2_0_11"/>
<dbReference type="OrthoDB" id="9810320at2"/>
<dbReference type="UniPathway" id="UPA00245"/>
<dbReference type="GO" id="GO:0005829">
    <property type="term" value="C:cytosol"/>
    <property type="evidence" value="ECO:0007669"/>
    <property type="project" value="TreeGrafter"/>
</dbReference>
<dbReference type="GO" id="GO:1903600">
    <property type="term" value="C:glutaminase complex"/>
    <property type="evidence" value="ECO:0007669"/>
    <property type="project" value="TreeGrafter"/>
</dbReference>
<dbReference type="GO" id="GO:0004359">
    <property type="term" value="F:glutaminase activity"/>
    <property type="evidence" value="ECO:0007669"/>
    <property type="project" value="UniProtKB-UniRule"/>
</dbReference>
<dbReference type="GO" id="GO:0036381">
    <property type="term" value="F:pyridoxal 5'-phosphate synthase (glutamine hydrolysing) activity"/>
    <property type="evidence" value="ECO:0007669"/>
    <property type="project" value="UniProtKB-UniRule"/>
</dbReference>
<dbReference type="GO" id="GO:0006543">
    <property type="term" value="P:glutamine catabolic process"/>
    <property type="evidence" value="ECO:0007669"/>
    <property type="project" value="UniProtKB-UniRule"/>
</dbReference>
<dbReference type="GO" id="GO:0042823">
    <property type="term" value="P:pyridoxal phosphate biosynthetic process"/>
    <property type="evidence" value="ECO:0007669"/>
    <property type="project" value="UniProtKB-UniRule"/>
</dbReference>
<dbReference type="GO" id="GO:0008614">
    <property type="term" value="P:pyridoxine metabolic process"/>
    <property type="evidence" value="ECO:0007669"/>
    <property type="project" value="TreeGrafter"/>
</dbReference>
<dbReference type="CDD" id="cd01749">
    <property type="entry name" value="GATase1_PB"/>
    <property type="match status" value="1"/>
</dbReference>
<dbReference type="FunFam" id="3.40.50.880:FF:000010">
    <property type="entry name" value="uncharacterized protein LOC100176842 isoform X2"/>
    <property type="match status" value="1"/>
</dbReference>
<dbReference type="Gene3D" id="3.40.50.880">
    <property type="match status" value="1"/>
</dbReference>
<dbReference type="HAMAP" id="MF_01615">
    <property type="entry name" value="PdxT"/>
    <property type="match status" value="1"/>
</dbReference>
<dbReference type="InterPro" id="IPR029062">
    <property type="entry name" value="Class_I_gatase-like"/>
</dbReference>
<dbReference type="InterPro" id="IPR002161">
    <property type="entry name" value="PdxT/SNO"/>
</dbReference>
<dbReference type="InterPro" id="IPR021196">
    <property type="entry name" value="PdxT/SNO_CS"/>
</dbReference>
<dbReference type="NCBIfam" id="TIGR03800">
    <property type="entry name" value="PLP_synth_Pdx2"/>
    <property type="match status" value="1"/>
</dbReference>
<dbReference type="PANTHER" id="PTHR31559">
    <property type="entry name" value="PYRIDOXAL 5'-PHOSPHATE SYNTHASE SUBUNIT SNO"/>
    <property type="match status" value="1"/>
</dbReference>
<dbReference type="PANTHER" id="PTHR31559:SF0">
    <property type="entry name" value="PYRIDOXAL 5'-PHOSPHATE SYNTHASE SUBUNIT SNO1-RELATED"/>
    <property type="match status" value="1"/>
</dbReference>
<dbReference type="Pfam" id="PF01174">
    <property type="entry name" value="SNO"/>
    <property type="match status" value="1"/>
</dbReference>
<dbReference type="PIRSF" id="PIRSF005639">
    <property type="entry name" value="Glut_amidoT_SNO"/>
    <property type="match status" value="1"/>
</dbReference>
<dbReference type="SUPFAM" id="SSF52317">
    <property type="entry name" value="Class I glutamine amidotransferase-like"/>
    <property type="match status" value="1"/>
</dbReference>
<dbReference type="PROSITE" id="PS01236">
    <property type="entry name" value="PDXT_SNO_1"/>
    <property type="match status" value="1"/>
</dbReference>
<dbReference type="PROSITE" id="PS51130">
    <property type="entry name" value="PDXT_SNO_2"/>
    <property type="match status" value="1"/>
</dbReference>
<evidence type="ECO:0000255" key="1">
    <source>
        <dbReference type="HAMAP-Rule" id="MF_01615"/>
    </source>
</evidence>
<comment type="function">
    <text evidence="1">Catalyzes the hydrolysis of glutamine to glutamate and ammonia as part of the biosynthesis of pyridoxal 5'-phosphate. The resulting ammonia molecule is channeled to the active site of PdxS.</text>
</comment>
<comment type="catalytic activity">
    <reaction evidence="1">
        <text>aldehydo-D-ribose 5-phosphate + D-glyceraldehyde 3-phosphate + L-glutamine = pyridoxal 5'-phosphate + L-glutamate + phosphate + 3 H2O + H(+)</text>
        <dbReference type="Rhea" id="RHEA:31507"/>
        <dbReference type="ChEBI" id="CHEBI:15377"/>
        <dbReference type="ChEBI" id="CHEBI:15378"/>
        <dbReference type="ChEBI" id="CHEBI:29985"/>
        <dbReference type="ChEBI" id="CHEBI:43474"/>
        <dbReference type="ChEBI" id="CHEBI:58273"/>
        <dbReference type="ChEBI" id="CHEBI:58359"/>
        <dbReference type="ChEBI" id="CHEBI:59776"/>
        <dbReference type="ChEBI" id="CHEBI:597326"/>
        <dbReference type="EC" id="4.3.3.6"/>
    </reaction>
</comment>
<comment type="catalytic activity">
    <reaction evidence="1">
        <text>L-glutamine + H2O = L-glutamate + NH4(+)</text>
        <dbReference type="Rhea" id="RHEA:15889"/>
        <dbReference type="ChEBI" id="CHEBI:15377"/>
        <dbReference type="ChEBI" id="CHEBI:28938"/>
        <dbReference type="ChEBI" id="CHEBI:29985"/>
        <dbReference type="ChEBI" id="CHEBI:58359"/>
        <dbReference type="EC" id="3.5.1.2"/>
    </reaction>
</comment>
<comment type="pathway">
    <text evidence="1">Cofactor biosynthesis; pyridoxal 5'-phosphate biosynthesis.</text>
</comment>
<comment type="subunit">
    <text evidence="1">In the presence of PdxS, forms a dodecamer of heterodimers. Only shows activity in the heterodimer.</text>
</comment>
<comment type="similarity">
    <text evidence="1">Belongs to the glutaminase PdxT/SNO family.</text>
</comment>
<gene>
    <name evidence="1" type="primary">pdxT</name>
    <name type="ordered locus">Mkms_2297</name>
</gene>
<organism>
    <name type="scientific">Mycobacterium sp. (strain KMS)</name>
    <dbReference type="NCBI Taxonomy" id="189918"/>
    <lineage>
        <taxon>Bacteria</taxon>
        <taxon>Bacillati</taxon>
        <taxon>Actinomycetota</taxon>
        <taxon>Actinomycetes</taxon>
        <taxon>Mycobacteriales</taxon>
        <taxon>Mycobacteriaceae</taxon>
        <taxon>Mycobacterium</taxon>
    </lineage>
</organism>
<reference key="1">
    <citation type="submission" date="2006-12" db="EMBL/GenBank/DDBJ databases">
        <title>Complete sequence of chromosome of Mycobacterium sp. KMS.</title>
        <authorList>
            <consortium name="US DOE Joint Genome Institute"/>
            <person name="Copeland A."/>
            <person name="Lucas S."/>
            <person name="Lapidus A."/>
            <person name="Barry K."/>
            <person name="Detter J.C."/>
            <person name="Glavina del Rio T."/>
            <person name="Hammon N."/>
            <person name="Israni S."/>
            <person name="Dalin E."/>
            <person name="Tice H."/>
            <person name="Pitluck S."/>
            <person name="Kiss H."/>
            <person name="Brettin T."/>
            <person name="Bruce D."/>
            <person name="Han C."/>
            <person name="Tapia R."/>
            <person name="Gilna P."/>
            <person name="Schmutz J."/>
            <person name="Larimer F."/>
            <person name="Land M."/>
            <person name="Hauser L."/>
            <person name="Kyrpides N."/>
            <person name="Mikhailova N."/>
            <person name="Miller C.D."/>
            <person name="Richardson P."/>
        </authorList>
    </citation>
    <scope>NUCLEOTIDE SEQUENCE [LARGE SCALE GENOMIC DNA]</scope>
    <source>
        <strain>KMS</strain>
    </source>
</reference>